<sequence length="435" mass="48302">MKGVNMEKQQPSKAALLSIIPGLGQIYNKQKAKGFIFLGVTIVFVLYFLALATPELSNLITLGDKPGRDNSLFMLIRGAFHLIFVIVYVLFYFSNIKDAHTIAKRINNGIPVPRTLKDMIKGIYENGFPYLLIIPSYVAMTFAIIFPVIVTLMIAFTNYDFQHLPPNKLLDWVGLTNFTNIWSLSTFRSAFGSVLSWTIIWALAASTLQIVIGIFTAIIANQPFIKGKRIFGVIFLLPWAVPAFITILTFSNMFNDSVGAINTQVLPILAKFLPFLDGALIPWKTDPTWTKIALIMMQGWLGFPYIYVLTLGILQSIPNDLYEAAYIDGANAWQKFRNITFPMILAVAAPTLISQYTFNFNNFSIMYLFNGGGPGSVGGGAGSTDILISWIYRLTTGTSPQYSMAAAVTLIISIIVISISMIAFKKLHAFDMEDV</sequence>
<protein>
    <recommendedName>
        <fullName>Maltodextrin transport system permease protein MalC</fullName>
    </recommendedName>
</protein>
<organism>
    <name type="scientific">Streptococcus pneumoniae (strain ATCC BAA-255 / R6)</name>
    <dbReference type="NCBI Taxonomy" id="171101"/>
    <lineage>
        <taxon>Bacteria</taxon>
        <taxon>Bacillati</taxon>
        <taxon>Bacillota</taxon>
        <taxon>Bacilli</taxon>
        <taxon>Lactobacillales</taxon>
        <taxon>Streptococcaceae</taxon>
        <taxon>Streptococcus</taxon>
    </lineage>
</organism>
<keyword id="KW-1003">Cell membrane</keyword>
<keyword id="KW-0472">Membrane</keyword>
<keyword id="KW-1185">Reference proteome</keyword>
<keyword id="KW-0762">Sugar transport</keyword>
<keyword id="KW-0812">Transmembrane</keyword>
<keyword id="KW-1133">Transmembrane helix</keyword>
<keyword id="KW-0813">Transport</keyword>
<name>MALC_STRR6</name>
<dbReference type="EMBL" id="AE007317">
    <property type="protein sequence ID" value="AAL00721.1"/>
    <property type="molecule type" value="Genomic_DNA"/>
</dbReference>
<dbReference type="PIR" id="D98111">
    <property type="entry name" value="D98111"/>
</dbReference>
<dbReference type="RefSeq" id="NP_359510.1">
    <property type="nucleotide sequence ID" value="NC_003098.1"/>
</dbReference>
<dbReference type="SMR" id="P0A4N2"/>
<dbReference type="STRING" id="171101.spr1919"/>
<dbReference type="KEGG" id="spr:spr1919"/>
<dbReference type="PATRIC" id="fig|171101.6.peg.2068"/>
<dbReference type="eggNOG" id="COG1175">
    <property type="taxonomic scope" value="Bacteria"/>
</dbReference>
<dbReference type="HOGENOM" id="CLU_016047_0_3_9"/>
<dbReference type="Proteomes" id="UP000000586">
    <property type="component" value="Chromosome"/>
</dbReference>
<dbReference type="GO" id="GO:1990060">
    <property type="term" value="C:maltose transport complex"/>
    <property type="evidence" value="ECO:0000318"/>
    <property type="project" value="GO_Central"/>
</dbReference>
<dbReference type="GO" id="GO:0015423">
    <property type="term" value="F:ABC-type maltose transporter activity"/>
    <property type="evidence" value="ECO:0000318"/>
    <property type="project" value="GO_Central"/>
</dbReference>
<dbReference type="GO" id="GO:0042956">
    <property type="term" value="P:maltodextrin transmembrane transport"/>
    <property type="evidence" value="ECO:0000318"/>
    <property type="project" value="GO_Central"/>
</dbReference>
<dbReference type="CDD" id="cd06261">
    <property type="entry name" value="TM_PBP2"/>
    <property type="match status" value="1"/>
</dbReference>
<dbReference type="FunFam" id="1.10.3720.10:FF:000036">
    <property type="entry name" value="Maltodextrin ABC transporter, permease protein"/>
    <property type="match status" value="1"/>
</dbReference>
<dbReference type="Gene3D" id="1.10.3720.10">
    <property type="entry name" value="MetI-like"/>
    <property type="match status" value="1"/>
</dbReference>
<dbReference type="InterPro" id="IPR000515">
    <property type="entry name" value="MetI-like"/>
</dbReference>
<dbReference type="InterPro" id="IPR035906">
    <property type="entry name" value="MetI-like_sf"/>
</dbReference>
<dbReference type="PANTHER" id="PTHR47314">
    <property type="entry name" value="MALTOSE/MALTODEXTRIN TRANSPORT SYSTEM PERMEASE PROTEIN MALF"/>
    <property type="match status" value="1"/>
</dbReference>
<dbReference type="PANTHER" id="PTHR47314:SF1">
    <property type="entry name" value="MALTOSE_MALTODEXTRIN TRANSPORT SYSTEM PERMEASE PROTEIN MALF"/>
    <property type="match status" value="1"/>
</dbReference>
<dbReference type="Pfam" id="PF00528">
    <property type="entry name" value="BPD_transp_1"/>
    <property type="match status" value="1"/>
</dbReference>
<dbReference type="SUPFAM" id="SSF160964">
    <property type="entry name" value="MalF N-terminal region-like"/>
    <property type="match status" value="1"/>
</dbReference>
<dbReference type="SUPFAM" id="SSF161098">
    <property type="entry name" value="MetI-like"/>
    <property type="match status" value="1"/>
</dbReference>
<dbReference type="PROSITE" id="PS50928">
    <property type="entry name" value="ABC_TM1"/>
    <property type="match status" value="1"/>
</dbReference>
<accession>P0A4N2</accession>
<accession>Q04698</accession>
<reference key="1">
    <citation type="journal article" date="2001" name="J. Bacteriol.">
        <title>Genome of the bacterium Streptococcus pneumoniae strain R6.</title>
        <authorList>
            <person name="Hoskins J."/>
            <person name="Alborn W.E. Jr."/>
            <person name="Arnold J."/>
            <person name="Blaszczak L.C."/>
            <person name="Burgett S."/>
            <person name="DeHoff B.S."/>
            <person name="Estrem S.T."/>
            <person name="Fritz L."/>
            <person name="Fu D.-J."/>
            <person name="Fuller W."/>
            <person name="Geringer C."/>
            <person name="Gilmour R."/>
            <person name="Glass J.S."/>
            <person name="Khoja H."/>
            <person name="Kraft A.R."/>
            <person name="Lagace R.E."/>
            <person name="LeBlanc D.J."/>
            <person name="Lee L.N."/>
            <person name="Lefkowitz E.J."/>
            <person name="Lu J."/>
            <person name="Matsushima P."/>
            <person name="McAhren S.M."/>
            <person name="McHenney M."/>
            <person name="McLeaster K."/>
            <person name="Mundy C.W."/>
            <person name="Nicas T.I."/>
            <person name="Norris F.H."/>
            <person name="O'Gara M."/>
            <person name="Peery R.B."/>
            <person name="Robertson G.T."/>
            <person name="Rockey P."/>
            <person name="Sun P.-M."/>
            <person name="Winkler M.E."/>
            <person name="Yang Y."/>
            <person name="Young-Bellido M."/>
            <person name="Zhao G."/>
            <person name="Zook C.A."/>
            <person name="Baltz R.H."/>
            <person name="Jaskunas S.R."/>
            <person name="Rosteck P.R. Jr."/>
            <person name="Skatrud P.L."/>
            <person name="Glass J.I."/>
        </authorList>
    </citation>
    <scope>NUCLEOTIDE SEQUENCE [LARGE SCALE GENOMIC DNA]</scope>
    <source>
        <strain>ATCC BAA-255 / R6</strain>
    </source>
</reference>
<gene>
    <name type="primary">malC</name>
    <name type="ordered locus">spr1919</name>
</gene>
<evidence type="ECO:0000250" key="1"/>
<evidence type="ECO:0000255" key="2">
    <source>
        <dbReference type="PROSITE-ProRule" id="PRU00441"/>
    </source>
</evidence>
<evidence type="ECO:0000305" key="3"/>
<feature type="chain" id="PRO_0000060095" description="Maltodextrin transport system permease protein MalC">
    <location>
        <begin position="1"/>
        <end position="435"/>
    </location>
</feature>
<feature type="transmembrane region" description="Helical" evidence="2">
    <location>
        <begin position="34"/>
        <end position="54"/>
    </location>
</feature>
<feature type="transmembrane region" description="Helical" evidence="2">
    <location>
        <begin position="73"/>
        <end position="93"/>
    </location>
</feature>
<feature type="transmembrane region" description="Helical" evidence="2">
    <location>
        <begin position="130"/>
        <end position="150"/>
    </location>
</feature>
<feature type="transmembrane region" description="Helical" evidence="2">
    <location>
        <begin position="199"/>
        <end position="219"/>
    </location>
</feature>
<feature type="transmembrane region" description="Helical" evidence="2">
    <location>
        <begin position="230"/>
        <end position="250"/>
    </location>
</feature>
<feature type="transmembrane region" description="Helical" evidence="2">
    <location>
        <begin position="263"/>
        <end position="283"/>
    </location>
</feature>
<feature type="transmembrane region" description="Helical" evidence="2">
    <location>
        <begin position="294"/>
        <end position="314"/>
    </location>
</feature>
<feature type="transmembrane region" description="Helical" evidence="2">
    <location>
        <begin position="338"/>
        <end position="358"/>
    </location>
</feature>
<feature type="transmembrane region" description="Helical" evidence="2">
    <location>
        <begin position="371"/>
        <end position="391"/>
    </location>
</feature>
<feature type="transmembrane region" description="Helical" evidence="2">
    <location>
        <begin position="404"/>
        <end position="424"/>
    </location>
</feature>
<feature type="domain" description="ABC transmembrane type-1" evidence="2">
    <location>
        <begin position="195"/>
        <end position="423"/>
    </location>
</feature>
<proteinExistence type="inferred from homology"/>
<comment type="function">
    <text evidence="1">Part of the binding-protein-dependent transport system for maltodextrin; probably responsible for the translocation of the substrate across the membrane.</text>
</comment>
<comment type="subcellular location">
    <subcellularLocation>
        <location evidence="1">Cell membrane</location>
        <topology evidence="2">Multi-pass membrane protein</topology>
    </subcellularLocation>
</comment>
<comment type="similarity">
    <text evidence="3">Belongs to the binding-protein-dependent transport system permease family. MalFG subfamily.</text>
</comment>